<protein>
    <recommendedName>
        <fullName evidence="1">dITP/XTP pyrophosphatase</fullName>
        <ecNumber evidence="1">3.6.1.66</ecNumber>
    </recommendedName>
    <alternativeName>
        <fullName evidence="1">Non-canonical purine NTP pyrophosphatase</fullName>
    </alternativeName>
    <alternativeName>
        <fullName evidence="1">Non-standard purine NTP pyrophosphatase</fullName>
    </alternativeName>
    <alternativeName>
        <fullName evidence="1">Nucleoside-triphosphate diphosphatase</fullName>
    </alternativeName>
    <alternativeName>
        <fullName evidence="1">Nucleoside-triphosphate pyrophosphatase</fullName>
        <shortName evidence="1">NTPase</shortName>
    </alternativeName>
</protein>
<organism>
    <name type="scientific">Xylella fastidiosa (strain Temecula1 / ATCC 700964)</name>
    <dbReference type="NCBI Taxonomy" id="183190"/>
    <lineage>
        <taxon>Bacteria</taxon>
        <taxon>Pseudomonadati</taxon>
        <taxon>Pseudomonadota</taxon>
        <taxon>Gammaproteobacteria</taxon>
        <taxon>Lysobacterales</taxon>
        <taxon>Lysobacteraceae</taxon>
        <taxon>Xylella</taxon>
    </lineage>
</organism>
<evidence type="ECO:0000255" key="1">
    <source>
        <dbReference type="HAMAP-Rule" id="MF_01405"/>
    </source>
</evidence>
<feature type="chain" id="PRO_0000178270" description="dITP/XTP pyrophosphatase">
    <location>
        <begin position="1"/>
        <end position="199"/>
    </location>
</feature>
<feature type="active site" description="Proton acceptor" evidence="1">
    <location>
        <position position="69"/>
    </location>
</feature>
<feature type="binding site" evidence="1">
    <location>
        <begin position="8"/>
        <end position="13"/>
    </location>
    <ligand>
        <name>substrate</name>
    </ligand>
</feature>
<feature type="binding site" evidence="1">
    <location>
        <position position="69"/>
    </location>
    <ligand>
        <name>Mg(2+)</name>
        <dbReference type="ChEBI" id="CHEBI:18420"/>
    </ligand>
</feature>
<feature type="binding site" evidence="1">
    <location>
        <position position="70"/>
    </location>
    <ligand>
        <name>substrate</name>
    </ligand>
</feature>
<feature type="binding site" evidence="1">
    <location>
        <begin position="154"/>
        <end position="157"/>
    </location>
    <ligand>
        <name>substrate</name>
    </ligand>
</feature>
<feature type="binding site" evidence="1">
    <location>
        <position position="177"/>
    </location>
    <ligand>
        <name>substrate</name>
    </ligand>
</feature>
<feature type="binding site" evidence="1">
    <location>
        <begin position="182"/>
        <end position="183"/>
    </location>
    <ligand>
        <name>substrate</name>
    </ligand>
</feature>
<gene>
    <name type="ordered locus">PD_0723</name>
</gene>
<dbReference type="EC" id="3.6.1.66" evidence="1"/>
<dbReference type="EMBL" id="AE009442">
    <property type="protein sequence ID" value="AAO28592.1"/>
    <property type="molecule type" value="Genomic_DNA"/>
</dbReference>
<dbReference type="SMR" id="Q87DG2"/>
<dbReference type="KEGG" id="xft:PD_0723"/>
<dbReference type="HOGENOM" id="CLU_082080_0_3_6"/>
<dbReference type="Proteomes" id="UP000002516">
    <property type="component" value="Chromosome"/>
</dbReference>
<dbReference type="GO" id="GO:0005829">
    <property type="term" value="C:cytosol"/>
    <property type="evidence" value="ECO:0007669"/>
    <property type="project" value="TreeGrafter"/>
</dbReference>
<dbReference type="GO" id="GO:0035870">
    <property type="term" value="F:dITP diphosphatase activity"/>
    <property type="evidence" value="ECO:0007669"/>
    <property type="project" value="RHEA"/>
</dbReference>
<dbReference type="GO" id="GO:0036220">
    <property type="term" value="F:ITP diphosphatase activity"/>
    <property type="evidence" value="ECO:0007669"/>
    <property type="project" value="UniProtKB-EC"/>
</dbReference>
<dbReference type="GO" id="GO:0046872">
    <property type="term" value="F:metal ion binding"/>
    <property type="evidence" value="ECO:0007669"/>
    <property type="project" value="UniProtKB-KW"/>
</dbReference>
<dbReference type="GO" id="GO:0000166">
    <property type="term" value="F:nucleotide binding"/>
    <property type="evidence" value="ECO:0007669"/>
    <property type="project" value="UniProtKB-KW"/>
</dbReference>
<dbReference type="GO" id="GO:0017111">
    <property type="term" value="F:ribonucleoside triphosphate phosphatase activity"/>
    <property type="evidence" value="ECO:0007669"/>
    <property type="project" value="InterPro"/>
</dbReference>
<dbReference type="GO" id="GO:0036222">
    <property type="term" value="F:XTP diphosphatase activity"/>
    <property type="evidence" value="ECO:0007669"/>
    <property type="project" value="RHEA"/>
</dbReference>
<dbReference type="GO" id="GO:0009117">
    <property type="term" value="P:nucleotide metabolic process"/>
    <property type="evidence" value="ECO:0007669"/>
    <property type="project" value="UniProtKB-KW"/>
</dbReference>
<dbReference type="GO" id="GO:0009146">
    <property type="term" value="P:purine nucleoside triphosphate catabolic process"/>
    <property type="evidence" value="ECO:0007669"/>
    <property type="project" value="UniProtKB-UniRule"/>
</dbReference>
<dbReference type="CDD" id="cd00515">
    <property type="entry name" value="HAM1"/>
    <property type="match status" value="1"/>
</dbReference>
<dbReference type="FunFam" id="3.90.950.10:FF:000001">
    <property type="entry name" value="dITP/XTP pyrophosphatase"/>
    <property type="match status" value="1"/>
</dbReference>
<dbReference type="Gene3D" id="3.90.950.10">
    <property type="match status" value="1"/>
</dbReference>
<dbReference type="HAMAP" id="MF_01405">
    <property type="entry name" value="Non_canon_purine_NTPase"/>
    <property type="match status" value="1"/>
</dbReference>
<dbReference type="InterPro" id="IPR020922">
    <property type="entry name" value="dITP/XTP_pyrophosphatase"/>
</dbReference>
<dbReference type="InterPro" id="IPR029001">
    <property type="entry name" value="ITPase-like_fam"/>
</dbReference>
<dbReference type="InterPro" id="IPR002637">
    <property type="entry name" value="RdgB/HAM1"/>
</dbReference>
<dbReference type="NCBIfam" id="TIGR00042">
    <property type="entry name" value="RdgB/HAM1 family non-canonical purine NTP pyrophosphatase"/>
    <property type="match status" value="1"/>
</dbReference>
<dbReference type="PANTHER" id="PTHR11067:SF9">
    <property type="entry name" value="INOSINE TRIPHOSPHATE PYROPHOSPHATASE"/>
    <property type="match status" value="1"/>
</dbReference>
<dbReference type="PANTHER" id="PTHR11067">
    <property type="entry name" value="INOSINE TRIPHOSPHATE PYROPHOSPHATASE/HAM1 PROTEIN"/>
    <property type="match status" value="1"/>
</dbReference>
<dbReference type="Pfam" id="PF01725">
    <property type="entry name" value="Ham1p_like"/>
    <property type="match status" value="1"/>
</dbReference>
<dbReference type="SUPFAM" id="SSF52972">
    <property type="entry name" value="ITPase-like"/>
    <property type="match status" value="1"/>
</dbReference>
<comment type="function">
    <text evidence="1">Pyrophosphatase that catalyzes the hydrolysis of nucleoside triphosphates to their monophosphate derivatives, with a high preference for the non-canonical purine nucleotides XTP (xanthosine triphosphate), dITP (deoxyinosine triphosphate) and ITP. Seems to function as a house-cleaning enzyme that removes non-canonical purine nucleotides from the nucleotide pool, thus preventing their incorporation into DNA/RNA and avoiding chromosomal lesions.</text>
</comment>
<comment type="catalytic activity">
    <reaction evidence="1">
        <text>XTP + H2O = XMP + diphosphate + H(+)</text>
        <dbReference type="Rhea" id="RHEA:28610"/>
        <dbReference type="ChEBI" id="CHEBI:15377"/>
        <dbReference type="ChEBI" id="CHEBI:15378"/>
        <dbReference type="ChEBI" id="CHEBI:33019"/>
        <dbReference type="ChEBI" id="CHEBI:57464"/>
        <dbReference type="ChEBI" id="CHEBI:61314"/>
        <dbReference type="EC" id="3.6.1.66"/>
    </reaction>
</comment>
<comment type="catalytic activity">
    <reaction evidence="1">
        <text>dITP + H2O = dIMP + diphosphate + H(+)</text>
        <dbReference type="Rhea" id="RHEA:28342"/>
        <dbReference type="ChEBI" id="CHEBI:15377"/>
        <dbReference type="ChEBI" id="CHEBI:15378"/>
        <dbReference type="ChEBI" id="CHEBI:33019"/>
        <dbReference type="ChEBI" id="CHEBI:61194"/>
        <dbReference type="ChEBI" id="CHEBI:61382"/>
        <dbReference type="EC" id="3.6.1.66"/>
    </reaction>
</comment>
<comment type="catalytic activity">
    <reaction evidence="1">
        <text>ITP + H2O = IMP + diphosphate + H(+)</text>
        <dbReference type="Rhea" id="RHEA:29399"/>
        <dbReference type="ChEBI" id="CHEBI:15377"/>
        <dbReference type="ChEBI" id="CHEBI:15378"/>
        <dbReference type="ChEBI" id="CHEBI:33019"/>
        <dbReference type="ChEBI" id="CHEBI:58053"/>
        <dbReference type="ChEBI" id="CHEBI:61402"/>
        <dbReference type="EC" id="3.6.1.66"/>
    </reaction>
</comment>
<comment type="cofactor">
    <cofactor evidence="1">
        <name>Mg(2+)</name>
        <dbReference type="ChEBI" id="CHEBI:18420"/>
    </cofactor>
    <text evidence="1">Binds 1 Mg(2+) ion per subunit.</text>
</comment>
<comment type="subunit">
    <text evidence="1">Homodimer.</text>
</comment>
<comment type="similarity">
    <text evidence="1">Belongs to the HAM1 NTPase family.</text>
</comment>
<sequence length="199" mass="21197">MKKLVLASGNAGKLGELRAMLAGVALQITAQGEFGVQDVPETGLTFIENALIKARHACLMTGFPALADDSGLIVDALGGAPGLYSARYAGTPTDAAANNAKLLEMLRDVPAGRRCARFYAVIVLLRHAEDPQPLIADGCWEGEIAFEPCGSGGFGYNPIFFDPLYGMTAAQMGAELKNKISHRARALERLRDCLHTFMA</sequence>
<proteinExistence type="inferred from homology"/>
<keyword id="KW-0378">Hydrolase</keyword>
<keyword id="KW-0460">Magnesium</keyword>
<keyword id="KW-0479">Metal-binding</keyword>
<keyword id="KW-0546">Nucleotide metabolism</keyword>
<keyword id="KW-0547">Nucleotide-binding</keyword>
<keyword id="KW-1185">Reference proteome</keyword>
<reference key="1">
    <citation type="journal article" date="2003" name="J. Bacteriol.">
        <title>Comparative analyses of the complete genome sequences of Pierce's disease and citrus variegated chlorosis strains of Xylella fastidiosa.</title>
        <authorList>
            <person name="Van Sluys M.A."/>
            <person name="de Oliveira M.C."/>
            <person name="Monteiro-Vitorello C.B."/>
            <person name="Miyaki C.Y."/>
            <person name="Furlan L.R."/>
            <person name="Camargo L.E.A."/>
            <person name="da Silva A.C.R."/>
            <person name="Moon D.H."/>
            <person name="Takita M.A."/>
            <person name="Lemos E.G.M."/>
            <person name="Machado M.A."/>
            <person name="Ferro M.I.T."/>
            <person name="da Silva F.R."/>
            <person name="Goldman M.H.S."/>
            <person name="Goldman G.H."/>
            <person name="Lemos M.V.F."/>
            <person name="El-Dorry H."/>
            <person name="Tsai S.M."/>
            <person name="Carrer H."/>
            <person name="Carraro D.M."/>
            <person name="de Oliveira R.C."/>
            <person name="Nunes L.R."/>
            <person name="Siqueira W.J."/>
            <person name="Coutinho L.L."/>
            <person name="Kimura E.T."/>
            <person name="Ferro E.S."/>
            <person name="Harakava R."/>
            <person name="Kuramae E.E."/>
            <person name="Marino C.L."/>
            <person name="Giglioti E."/>
            <person name="Abreu I.L."/>
            <person name="Alves L.M.C."/>
            <person name="do Amaral A.M."/>
            <person name="Baia G.S."/>
            <person name="Blanco S.R."/>
            <person name="Brito M.S."/>
            <person name="Cannavan F.S."/>
            <person name="Celestino A.V."/>
            <person name="da Cunha A.F."/>
            <person name="Fenille R.C."/>
            <person name="Ferro J.A."/>
            <person name="Formighieri E.F."/>
            <person name="Kishi L.T."/>
            <person name="Leoni S.G."/>
            <person name="Oliveira A.R."/>
            <person name="Rosa V.E. Jr."/>
            <person name="Sassaki F.T."/>
            <person name="Sena J.A.D."/>
            <person name="de Souza A.A."/>
            <person name="Truffi D."/>
            <person name="Tsukumo F."/>
            <person name="Yanai G.M."/>
            <person name="Zaros L.G."/>
            <person name="Civerolo E.L."/>
            <person name="Simpson A.J.G."/>
            <person name="Almeida N.F. Jr."/>
            <person name="Setubal J.C."/>
            <person name="Kitajima J.P."/>
        </authorList>
    </citation>
    <scope>NUCLEOTIDE SEQUENCE [LARGE SCALE GENOMIC DNA]</scope>
    <source>
        <strain>Temecula1 / ATCC 700964</strain>
    </source>
</reference>
<accession>Q87DG2</accession>
<name>IXTPA_XYLFT</name>